<accession>Q8Y0B8</accession>
<sequence length="554" mass="61441">MTKFVFVTGGVVSSLGKGIAAASLAAILESRGLKVTLLKLDPYINVDPGTMSPFQHGEVFVTEDGAETDLDLGHYERFVSAKMRKANNFTTGQIYESVIRKERRGEYLGKTVQVIPHITNEIQAFIERGAKASHDGKADVAIVEIGGTVGDIESLPFLEAARQMSLRLGRNQAAFVHLTLVPFIASAGELKTKPTQHSVQKLREIGVQPTALLCRADRPIPDDERAKISLFANMPQDAVISVWDVDTIYKIPQMLNEQGLDRIICEELRIDAPPADLSMWSRMVHTLENPQHEITIGMVGKYVDLTESYKSLIEALRHAGLHTSTRVNIEYIDSEELESGHTQVLESLDAILVPGGFGKRGTEGKIRAIQYAREKTVPYLGICLGMQLAVIEFARHVAGMQDANSTEFNLETEHPVVALITEWQDRDGRVEKRSADSDLGGTMRLGAQRVPVQTGTKASQIYGAEVNERHRHRYEVNNHYVPQLEKSGMIISARTPSENLPEMMELPGAMHPWFVGVQFHPEFTSTPRDGHPLFKAYVEAALAHRQRQAQRAVA</sequence>
<organism>
    <name type="scientific">Ralstonia nicotianae (strain ATCC BAA-1114 / GMI1000)</name>
    <name type="common">Ralstonia solanacearum</name>
    <dbReference type="NCBI Taxonomy" id="267608"/>
    <lineage>
        <taxon>Bacteria</taxon>
        <taxon>Pseudomonadati</taxon>
        <taxon>Pseudomonadota</taxon>
        <taxon>Betaproteobacteria</taxon>
        <taxon>Burkholderiales</taxon>
        <taxon>Burkholderiaceae</taxon>
        <taxon>Ralstonia</taxon>
        <taxon>Ralstonia solanacearum species complex</taxon>
    </lineage>
</organism>
<proteinExistence type="inferred from homology"/>
<comment type="function">
    <text evidence="1">Catalyzes the ATP-dependent amination of UTP to CTP with either L-glutamine or ammonia as the source of nitrogen. Regulates intracellular CTP levels through interactions with the four ribonucleotide triphosphates.</text>
</comment>
<comment type="catalytic activity">
    <reaction evidence="1">
        <text>UTP + L-glutamine + ATP + H2O = CTP + L-glutamate + ADP + phosphate + 2 H(+)</text>
        <dbReference type="Rhea" id="RHEA:26426"/>
        <dbReference type="ChEBI" id="CHEBI:15377"/>
        <dbReference type="ChEBI" id="CHEBI:15378"/>
        <dbReference type="ChEBI" id="CHEBI:29985"/>
        <dbReference type="ChEBI" id="CHEBI:30616"/>
        <dbReference type="ChEBI" id="CHEBI:37563"/>
        <dbReference type="ChEBI" id="CHEBI:43474"/>
        <dbReference type="ChEBI" id="CHEBI:46398"/>
        <dbReference type="ChEBI" id="CHEBI:58359"/>
        <dbReference type="ChEBI" id="CHEBI:456216"/>
        <dbReference type="EC" id="6.3.4.2"/>
    </reaction>
</comment>
<comment type="catalytic activity">
    <reaction evidence="1">
        <text>L-glutamine + H2O = L-glutamate + NH4(+)</text>
        <dbReference type="Rhea" id="RHEA:15889"/>
        <dbReference type="ChEBI" id="CHEBI:15377"/>
        <dbReference type="ChEBI" id="CHEBI:28938"/>
        <dbReference type="ChEBI" id="CHEBI:29985"/>
        <dbReference type="ChEBI" id="CHEBI:58359"/>
    </reaction>
</comment>
<comment type="catalytic activity">
    <reaction evidence="1">
        <text>UTP + NH4(+) + ATP = CTP + ADP + phosphate + 2 H(+)</text>
        <dbReference type="Rhea" id="RHEA:16597"/>
        <dbReference type="ChEBI" id="CHEBI:15378"/>
        <dbReference type="ChEBI" id="CHEBI:28938"/>
        <dbReference type="ChEBI" id="CHEBI:30616"/>
        <dbReference type="ChEBI" id="CHEBI:37563"/>
        <dbReference type="ChEBI" id="CHEBI:43474"/>
        <dbReference type="ChEBI" id="CHEBI:46398"/>
        <dbReference type="ChEBI" id="CHEBI:456216"/>
    </reaction>
</comment>
<comment type="activity regulation">
    <text evidence="1">Allosterically activated by GTP, when glutamine is the substrate; GTP has no effect on the reaction when ammonia is the substrate. The allosteric effector GTP functions by stabilizing the protein conformation that binds the tetrahedral intermediate(s) formed during glutamine hydrolysis. Inhibited by the product CTP, via allosteric rather than competitive inhibition.</text>
</comment>
<comment type="pathway">
    <text evidence="1">Pyrimidine metabolism; CTP biosynthesis via de novo pathway; CTP from UDP: step 2/2.</text>
</comment>
<comment type="subunit">
    <text evidence="1">Homotetramer.</text>
</comment>
<comment type="miscellaneous">
    <text evidence="1">CTPSs have evolved a hybrid strategy for distinguishing between UTP and CTP. The overlapping regions of the product feedback inhibitory and substrate sites recognize a common feature in both compounds, the triphosphate moiety. To differentiate isosteric substrate and product pyrimidine rings, an additional pocket far from the expected kinase/ligase catalytic site, specifically recognizes the cytosine and ribose portions of the product inhibitor.</text>
</comment>
<comment type="similarity">
    <text evidence="1">Belongs to the CTP synthase family.</text>
</comment>
<evidence type="ECO:0000255" key="1">
    <source>
        <dbReference type="HAMAP-Rule" id="MF_01227"/>
    </source>
</evidence>
<gene>
    <name evidence="1" type="primary">pyrG</name>
    <name type="ordered locus">RSc1126</name>
    <name type="ORF">RS04627</name>
</gene>
<keyword id="KW-0067">ATP-binding</keyword>
<keyword id="KW-0315">Glutamine amidotransferase</keyword>
<keyword id="KW-0436">Ligase</keyword>
<keyword id="KW-0460">Magnesium</keyword>
<keyword id="KW-0479">Metal-binding</keyword>
<keyword id="KW-0547">Nucleotide-binding</keyword>
<keyword id="KW-0665">Pyrimidine biosynthesis</keyword>
<keyword id="KW-1185">Reference proteome</keyword>
<name>PYRG_RALN1</name>
<feature type="chain" id="PRO_0000138213" description="CTP synthase">
    <location>
        <begin position="1"/>
        <end position="554"/>
    </location>
</feature>
<feature type="domain" description="Glutamine amidotransferase type-1" evidence="1">
    <location>
        <begin position="295"/>
        <end position="547"/>
    </location>
</feature>
<feature type="region of interest" description="Amidoligase domain" evidence="1">
    <location>
        <begin position="1"/>
        <end position="270"/>
    </location>
</feature>
<feature type="active site" description="Nucleophile; for glutamine hydrolysis" evidence="1">
    <location>
        <position position="383"/>
    </location>
</feature>
<feature type="active site" evidence="1">
    <location>
        <position position="520"/>
    </location>
</feature>
<feature type="active site" evidence="1">
    <location>
        <position position="522"/>
    </location>
</feature>
<feature type="binding site" evidence="1">
    <location>
        <position position="13"/>
    </location>
    <ligand>
        <name>CTP</name>
        <dbReference type="ChEBI" id="CHEBI:37563"/>
        <note>allosteric inhibitor</note>
    </ligand>
</feature>
<feature type="binding site" evidence="1">
    <location>
        <position position="13"/>
    </location>
    <ligand>
        <name>UTP</name>
        <dbReference type="ChEBI" id="CHEBI:46398"/>
    </ligand>
</feature>
<feature type="binding site" evidence="1">
    <location>
        <begin position="14"/>
        <end position="19"/>
    </location>
    <ligand>
        <name>ATP</name>
        <dbReference type="ChEBI" id="CHEBI:30616"/>
    </ligand>
</feature>
<feature type="binding site" evidence="1">
    <location>
        <position position="71"/>
    </location>
    <ligand>
        <name>ATP</name>
        <dbReference type="ChEBI" id="CHEBI:30616"/>
    </ligand>
</feature>
<feature type="binding site" evidence="1">
    <location>
        <position position="71"/>
    </location>
    <ligand>
        <name>Mg(2+)</name>
        <dbReference type="ChEBI" id="CHEBI:18420"/>
    </ligand>
</feature>
<feature type="binding site" evidence="1">
    <location>
        <position position="144"/>
    </location>
    <ligand>
        <name>Mg(2+)</name>
        <dbReference type="ChEBI" id="CHEBI:18420"/>
    </ligand>
</feature>
<feature type="binding site" evidence="1">
    <location>
        <begin position="151"/>
        <end position="153"/>
    </location>
    <ligand>
        <name>CTP</name>
        <dbReference type="ChEBI" id="CHEBI:37563"/>
        <note>allosteric inhibitor</note>
    </ligand>
</feature>
<feature type="binding site" evidence="1">
    <location>
        <begin position="191"/>
        <end position="196"/>
    </location>
    <ligand>
        <name>CTP</name>
        <dbReference type="ChEBI" id="CHEBI:37563"/>
        <note>allosteric inhibitor</note>
    </ligand>
</feature>
<feature type="binding site" evidence="1">
    <location>
        <begin position="191"/>
        <end position="196"/>
    </location>
    <ligand>
        <name>UTP</name>
        <dbReference type="ChEBI" id="CHEBI:46398"/>
    </ligand>
</feature>
<feature type="binding site" evidence="1">
    <location>
        <position position="227"/>
    </location>
    <ligand>
        <name>CTP</name>
        <dbReference type="ChEBI" id="CHEBI:37563"/>
        <note>allosteric inhibitor</note>
    </ligand>
</feature>
<feature type="binding site" evidence="1">
    <location>
        <position position="227"/>
    </location>
    <ligand>
        <name>UTP</name>
        <dbReference type="ChEBI" id="CHEBI:46398"/>
    </ligand>
</feature>
<feature type="binding site" evidence="1">
    <location>
        <position position="356"/>
    </location>
    <ligand>
        <name>L-glutamine</name>
        <dbReference type="ChEBI" id="CHEBI:58359"/>
    </ligand>
</feature>
<feature type="binding site" evidence="1">
    <location>
        <begin position="384"/>
        <end position="387"/>
    </location>
    <ligand>
        <name>L-glutamine</name>
        <dbReference type="ChEBI" id="CHEBI:58359"/>
    </ligand>
</feature>
<feature type="binding site" evidence="1">
    <location>
        <position position="407"/>
    </location>
    <ligand>
        <name>L-glutamine</name>
        <dbReference type="ChEBI" id="CHEBI:58359"/>
    </ligand>
</feature>
<feature type="binding site" evidence="1">
    <location>
        <position position="473"/>
    </location>
    <ligand>
        <name>L-glutamine</name>
        <dbReference type="ChEBI" id="CHEBI:58359"/>
    </ligand>
</feature>
<reference key="1">
    <citation type="journal article" date="2002" name="Nature">
        <title>Genome sequence of the plant pathogen Ralstonia solanacearum.</title>
        <authorList>
            <person name="Salanoubat M."/>
            <person name="Genin S."/>
            <person name="Artiguenave F."/>
            <person name="Gouzy J."/>
            <person name="Mangenot S."/>
            <person name="Arlat M."/>
            <person name="Billault A."/>
            <person name="Brottier P."/>
            <person name="Camus J.-C."/>
            <person name="Cattolico L."/>
            <person name="Chandler M."/>
            <person name="Choisne N."/>
            <person name="Claudel-Renard C."/>
            <person name="Cunnac S."/>
            <person name="Demange N."/>
            <person name="Gaspin C."/>
            <person name="Lavie M."/>
            <person name="Moisan A."/>
            <person name="Robert C."/>
            <person name="Saurin W."/>
            <person name="Schiex T."/>
            <person name="Siguier P."/>
            <person name="Thebault P."/>
            <person name="Whalen M."/>
            <person name="Wincker P."/>
            <person name="Levy M."/>
            <person name="Weissenbach J."/>
            <person name="Boucher C.A."/>
        </authorList>
    </citation>
    <scope>NUCLEOTIDE SEQUENCE [LARGE SCALE GENOMIC DNA]</scope>
    <source>
        <strain>ATCC BAA-1114 / GMI1000</strain>
    </source>
</reference>
<protein>
    <recommendedName>
        <fullName evidence="1">CTP synthase</fullName>
        <ecNumber evidence="1">6.3.4.2</ecNumber>
    </recommendedName>
    <alternativeName>
        <fullName evidence="1">Cytidine 5'-triphosphate synthase</fullName>
    </alternativeName>
    <alternativeName>
        <fullName evidence="1">Cytidine triphosphate synthetase</fullName>
        <shortName evidence="1">CTP synthetase</shortName>
        <shortName evidence="1">CTPS</shortName>
    </alternativeName>
    <alternativeName>
        <fullName evidence="1">UTP--ammonia ligase</fullName>
    </alternativeName>
</protein>
<dbReference type="EC" id="6.3.4.2" evidence="1"/>
<dbReference type="EMBL" id="AL646052">
    <property type="protein sequence ID" value="CAD14828.1"/>
    <property type="molecule type" value="Genomic_DNA"/>
</dbReference>
<dbReference type="RefSeq" id="WP_011001076.1">
    <property type="nucleotide sequence ID" value="NC_003295.1"/>
</dbReference>
<dbReference type="SMR" id="Q8Y0B8"/>
<dbReference type="STRING" id="267608.RSc1126"/>
<dbReference type="EnsemblBacteria" id="CAD14828">
    <property type="protein sequence ID" value="CAD14828"/>
    <property type="gene ID" value="RSc1126"/>
</dbReference>
<dbReference type="KEGG" id="rso:RSc1126"/>
<dbReference type="eggNOG" id="COG0504">
    <property type="taxonomic scope" value="Bacteria"/>
</dbReference>
<dbReference type="HOGENOM" id="CLU_011675_5_0_4"/>
<dbReference type="UniPathway" id="UPA00159">
    <property type="reaction ID" value="UER00277"/>
</dbReference>
<dbReference type="Proteomes" id="UP000001436">
    <property type="component" value="Chromosome"/>
</dbReference>
<dbReference type="GO" id="GO:0005829">
    <property type="term" value="C:cytosol"/>
    <property type="evidence" value="ECO:0007669"/>
    <property type="project" value="TreeGrafter"/>
</dbReference>
<dbReference type="GO" id="GO:0005524">
    <property type="term" value="F:ATP binding"/>
    <property type="evidence" value="ECO:0007669"/>
    <property type="project" value="UniProtKB-KW"/>
</dbReference>
<dbReference type="GO" id="GO:0003883">
    <property type="term" value="F:CTP synthase activity"/>
    <property type="evidence" value="ECO:0007669"/>
    <property type="project" value="UniProtKB-UniRule"/>
</dbReference>
<dbReference type="GO" id="GO:0004359">
    <property type="term" value="F:glutaminase activity"/>
    <property type="evidence" value="ECO:0007669"/>
    <property type="project" value="RHEA"/>
</dbReference>
<dbReference type="GO" id="GO:0042802">
    <property type="term" value="F:identical protein binding"/>
    <property type="evidence" value="ECO:0007669"/>
    <property type="project" value="TreeGrafter"/>
</dbReference>
<dbReference type="GO" id="GO:0046872">
    <property type="term" value="F:metal ion binding"/>
    <property type="evidence" value="ECO:0007669"/>
    <property type="project" value="UniProtKB-KW"/>
</dbReference>
<dbReference type="GO" id="GO:0044210">
    <property type="term" value="P:'de novo' CTP biosynthetic process"/>
    <property type="evidence" value="ECO:0007669"/>
    <property type="project" value="UniProtKB-UniRule"/>
</dbReference>
<dbReference type="GO" id="GO:0019856">
    <property type="term" value="P:pyrimidine nucleobase biosynthetic process"/>
    <property type="evidence" value="ECO:0007669"/>
    <property type="project" value="TreeGrafter"/>
</dbReference>
<dbReference type="CDD" id="cd03113">
    <property type="entry name" value="CTPS_N"/>
    <property type="match status" value="1"/>
</dbReference>
<dbReference type="CDD" id="cd01746">
    <property type="entry name" value="GATase1_CTP_Synthase"/>
    <property type="match status" value="1"/>
</dbReference>
<dbReference type="FunFam" id="3.40.50.300:FF:000009">
    <property type="entry name" value="CTP synthase"/>
    <property type="match status" value="1"/>
</dbReference>
<dbReference type="FunFam" id="3.40.50.880:FF:000002">
    <property type="entry name" value="CTP synthase"/>
    <property type="match status" value="1"/>
</dbReference>
<dbReference type="Gene3D" id="3.40.50.880">
    <property type="match status" value="1"/>
</dbReference>
<dbReference type="Gene3D" id="3.40.50.300">
    <property type="entry name" value="P-loop containing nucleotide triphosphate hydrolases"/>
    <property type="match status" value="1"/>
</dbReference>
<dbReference type="HAMAP" id="MF_01227">
    <property type="entry name" value="PyrG"/>
    <property type="match status" value="1"/>
</dbReference>
<dbReference type="InterPro" id="IPR029062">
    <property type="entry name" value="Class_I_gatase-like"/>
</dbReference>
<dbReference type="InterPro" id="IPR004468">
    <property type="entry name" value="CTP_synthase"/>
</dbReference>
<dbReference type="InterPro" id="IPR017456">
    <property type="entry name" value="CTP_synthase_N"/>
</dbReference>
<dbReference type="InterPro" id="IPR017926">
    <property type="entry name" value="GATASE"/>
</dbReference>
<dbReference type="InterPro" id="IPR033828">
    <property type="entry name" value="GATase1_CTP_Synthase"/>
</dbReference>
<dbReference type="InterPro" id="IPR027417">
    <property type="entry name" value="P-loop_NTPase"/>
</dbReference>
<dbReference type="NCBIfam" id="NF003792">
    <property type="entry name" value="PRK05380.1"/>
    <property type="match status" value="1"/>
</dbReference>
<dbReference type="NCBIfam" id="TIGR00337">
    <property type="entry name" value="PyrG"/>
    <property type="match status" value="1"/>
</dbReference>
<dbReference type="PANTHER" id="PTHR11550">
    <property type="entry name" value="CTP SYNTHASE"/>
    <property type="match status" value="1"/>
</dbReference>
<dbReference type="PANTHER" id="PTHR11550:SF0">
    <property type="entry name" value="CTP SYNTHASE-RELATED"/>
    <property type="match status" value="1"/>
</dbReference>
<dbReference type="Pfam" id="PF06418">
    <property type="entry name" value="CTP_synth_N"/>
    <property type="match status" value="1"/>
</dbReference>
<dbReference type="Pfam" id="PF00117">
    <property type="entry name" value="GATase"/>
    <property type="match status" value="1"/>
</dbReference>
<dbReference type="SUPFAM" id="SSF52317">
    <property type="entry name" value="Class I glutamine amidotransferase-like"/>
    <property type="match status" value="1"/>
</dbReference>
<dbReference type="SUPFAM" id="SSF52540">
    <property type="entry name" value="P-loop containing nucleoside triphosphate hydrolases"/>
    <property type="match status" value="1"/>
</dbReference>
<dbReference type="PROSITE" id="PS51273">
    <property type="entry name" value="GATASE_TYPE_1"/>
    <property type="match status" value="1"/>
</dbReference>